<protein>
    <recommendedName>
        <fullName evidence="1">UPF0386 protein YjhX</fullName>
    </recommendedName>
</protein>
<proteinExistence type="inferred from homology"/>
<dbReference type="EMBL" id="CU928163">
    <property type="protein sequence ID" value="CAR16019.1"/>
    <property type="molecule type" value="Genomic_DNA"/>
</dbReference>
<dbReference type="RefSeq" id="WP_001054376.1">
    <property type="nucleotide sequence ID" value="NC_011751.1"/>
</dbReference>
<dbReference type="RefSeq" id="YP_002415488.1">
    <property type="nucleotide sequence ID" value="NC_011751.1"/>
</dbReference>
<dbReference type="STRING" id="585056.ECUMN_4908"/>
<dbReference type="KEGG" id="eum:ECUMN_4908"/>
<dbReference type="PATRIC" id="fig|585056.7.peg.5073"/>
<dbReference type="HOGENOM" id="CLU_164736_0_0_6"/>
<dbReference type="Proteomes" id="UP000007097">
    <property type="component" value="Chromosome"/>
</dbReference>
<dbReference type="HAMAP" id="MF_00827">
    <property type="entry name" value="UPF0386"/>
    <property type="match status" value="1"/>
</dbReference>
<dbReference type="InterPro" id="IPR018654">
    <property type="entry name" value="YjhX_toxin"/>
</dbReference>
<dbReference type="NCBIfam" id="NF010240">
    <property type="entry name" value="PRK13687.1"/>
    <property type="match status" value="1"/>
</dbReference>
<dbReference type="Pfam" id="PF09857">
    <property type="entry name" value="YjhX_toxin"/>
    <property type="match status" value="1"/>
</dbReference>
<organism>
    <name type="scientific">Escherichia coli O17:K52:H18 (strain UMN026 / ExPEC)</name>
    <dbReference type="NCBI Taxonomy" id="585056"/>
    <lineage>
        <taxon>Bacteria</taxon>
        <taxon>Pseudomonadati</taxon>
        <taxon>Pseudomonadota</taxon>
        <taxon>Gammaproteobacteria</taxon>
        <taxon>Enterobacterales</taxon>
        <taxon>Enterobacteriaceae</taxon>
        <taxon>Escherichia</taxon>
    </lineage>
</organism>
<accession>B7NGV6</accession>
<gene>
    <name evidence="1" type="primary">yjhX</name>
    <name type="ordered locus">ECUMN_4908</name>
</gene>
<comment type="similarity">
    <text evidence="1">Belongs to the UPF0386 family.</text>
</comment>
<sequence length="85" mass="9734">MNLSRQEQHTLHVLAKGRRIAHVRDSSGRVTSVECYSREGLLLTDCTLAVFKKLKTKKLIKSVNGQPYRINTTELNKVRAQLDNR</sequence>
<feature type="chain" id="PRO_1000200702" description="UPF0386 protein YjhX">
    <location>
        <begin position="1"/>
        <end position="85"/>
    </location>
</feature>
<evidence type="ECO:0000255" key="1">
    <source>
        <dbReference type="HAMAP-Rule" id="MF_00827"/>
    </source>
</evidence>
<reference key="1">
    <citation type="journal article" date="2009" name="PLoS Genet.">
        <title>Organised genome dynamics in the Escherichia coli species results in highly diverse adaptive paths.</title>
        <authorList>
            <person name="Touchon M."/>
            <person name="Hoede C."/>
            <person name="Tenaillon O."/>
            <person name="Barbe V."/>
            <person name="Baeriswyl S."/>
            <person name="Bidet P."/>
            <person name="Bingen E."/>
            <person name="Bonacorsi S."/>
            <person name="Bouchier C."/>
            <person name="Bouvet O."/>
            <person name="Calteau A."/>
            <person name="Chiapello H."/>
            <person name="Clermont O."/>
            <person name="Cruveiller S."/>
            <person name="Danchin A."/>
            <person name="Diard M."/>
            <person name="Dossat C."/>
            <person name="Karoui M.E."/>
            <person name="Frapy E."/>
            <person name="Garry L."/>
            <person name="Ghigo J.M."/>
            <person name="Gilles A.M."/>
            <person name="Johnson J."/>
            <person name="Le Bouguenec C."/>
            <person name="Lescat M."/>
            <person name="Mangenot S."/>
            <person name="Martinez-Jehanne V."/>
            <person name="Matic I."/>
            <person name="Nassif X."/>
            <person name="Oztas S."/>
            <person name="Petit M.A."/>
            <person name="Pichon C."/>
            <person name="Rouy Z."/>
            <person name="Ruf C.S."/>
            <person name="Schneider D."/>
            <person name="Tourret J."/>
            <person name="Vacherie B."/>
            <person name="Vallenet D."/>
            <person name="Medigue C."/>
            <person name="Rocha E.P.C."/>
            <person name="Denamur E."/>
        </authorList>
    </citation>
    <scope>NUCLEOTIDE SEQUENCE [LARGE SCALE GENOMIC DNA]</scope>
    <source>
        <strain>UMN026 / ExPEC</strain>
    </source>
</reference>
<name>YJHX_ECOLU</name>